<sequence>MQTHEIRKRFLDHFVKAGHTEVPSASVILDDPNLLFVNAGMVQFVPYFLGQRTPPWNRATSIQKCIRTPDIDEVGITTRHNTFFQMAGNFSFGDYFKRGAIELAWTLLTNPVEEGGYGFDPERLWATVYLDDDEAIGLWQEVAGLPAERIQRRGMADNYWSMGIPGPCGPSSEIYYDRGPEYGVEGGPEANEDRYIEIWNLVFMQNERGEGTSKEDFEILGPLPRKNIDTGMGIERVACLLQGVDNVYETDLLRPVIDKVAAVAPRGYGAGNHDDDVRYRIIADHTRTAAIIIADGVSPGNEGRGYVLRRLLRRIIRAAKLLGVEQPVMGDLIATVRDAMGPSYPELVTDFERINRIAVAEETAFNRTLASGSKLFEDAARATKKSGATVLSGSDAFTLHDTYGFPIDLTLEMAAEAGLSVDQEGFRTLMAEQRQRAKADAAARKQAHTDLSAYRELVDAGPTEFTGFDELTSEATILGIFVDGKRVPVVSHDGLEADRVELILDRTPFYAEAGGQIADEGTISGTGASGTARAAVTDVQKIARTLWAHRVNVESGEFVEGDTVTAAVDPKWRRGATQGHSGTHMVHAALREVLGPNAVQAGSLNRPGYLRFDFNWQGPLSDDQRTQIEEVTNQAVEADYEVHTFVTELEKAKAMGAMAMFGERYPDQVRVVEIGGPFSLELCGGTHVHNSAQIGPVTILGESSVGSGVRRVEAYVGLDSFRHLAKERALMAGLASSLKVPSEEVPARVANLVERLKAAEKELDRMRLANARAAAVNAVAGAETVGKVRLVAQRMSGGMSANDLRSLVGDIRGKLGSEPAVVALIAEGENDAVPFVVAVNPAAQDLGLRANDLVKQFAAPVNGRGGGKADLAQGSGKGAAGIDAALAALRAEIGRS</sequence>
<reference key="1">
    <citation type="submission" date="2006-10" db="EMBL/GenBank/DDBJ databases">
        <authorList>
            <person name="Fleischmann R.D."/>
            <person name="Dodson R.J."/>
            <person name="Haft D.H."/>
            <person name="Merkel J.S."/>
            <person name="Nelson W.C."/>
            <person name="Fraser C.M."/>
        </authorList>
    </citation>
    <scope>NUCLEOTIDE SEQUENCE [LARGE SCALE GENOMIC DNA]</scope>
    <source>
        <strain>ATCC 700084 / mc(2)155</strain>
    </source>
</reference>
<reference key="2">
    <citation type="journal article" date="2007" name="Genome Biol.">
        <title>Interrupted coding sequences in Mycobacterium smegmatis: authentic mutations or sequencing errors?</title>
        <authorList>
            <person name="Deshayes C."/>
            <person name="Perrodou E."/>
            <person name="Gallien S."/>
            <person name="Euphrasie D."/>
            <person name="Schaeffer C."/>
            <person name="Van-Dorsselaer A."/>
            <person name="Poch O."/>
            <person name="Lecompte O."/>
            <person name="Reyrat J.-M."/>
        </authorList>
    </citation>
    <scope>NUCLEOTIDE SEQUENCE [LARGE SCALE GENOMIC DNA]</scope>
    <source>
        <strain>ATCC 700084 / mc(2)155</strain>
    </source>
</reference>
<reference key="3">
    <citation type="journal article" date="2009" name="Genome Res.">
        <title>Ortho-proteogenomics: multiple proteomes investigation through orthology and a new MS-based protocol.</title>
        <authorList>
            <person name="Gallien S."/>
            <person name="Perrodou E."/>
            <person name="Carapito C."/>
            <person name="Deshayes C."/>
            <person name="Reyrat J.-M."/>
            <person name="Van Dorsselaer A."/>
            <person name="Poch O."/>
            <person name="Schaeffer C."/>
            <person name="Lecompte O."/>
        </authorList>
    </citation>
    <scope>NUCLEOTIDE SEQUENCE [LARGE SCALE GENOMIC DNA]</scope>
    <scope>IDENTIFICATION BY MASS SPECTROMETRY [LARGE SCALE ANALYSIS]</scope>
    <scope>IDENTIFICATION OF N-TERMINUS</scope>
    <source>
        <strain>ATCC 700084 / mc(2)155</strain>
    </source>
</reference>
<name>SYA_MYCS2</name>
<comment type="function">
    <text evidence="1">Catalyzes the attachment of alanine to tRNA(Ala) in a two-step reaction: alanine is first activated by ATP to form Ala-AMP and then transferred to the acceptor end of tRNA(Ala). Also edits incorrectly charged Ser-tRNA(Ala) and Gly-tRNA(Ala) via its editing domain.</text>
</comment>
<comment type="catalytic activity">
    <reaction evidence="1">
        <text>tRNA(Ala) + L-alanine + ATP = L-alanyl-tRNA(Ala) + AMP + diphosphate</text>
        <dbReference type="Rhea" id="RHEA:12540"/>
        <dbReference type="Rhea" id="RHEA-COMP:9657"/>
        <dbReference type="Rhea" id="RHEA-COMP:9923"/>
        <dbReference type="ChEBI" id="CHEBI:30616"/>
        <dbReference type="ChEBI" id="CHEBI:33019"/>
        <dbReference type="ChEBI" id="CHEBI:57972"/>
        <dbReference type="ChEBI" id="CHEBI:78442"/>
        <dbReference type="ChEBI" id="CHEBI:78497"/>
        <dbReference type="ChEBI" id="CHEBI:456215"/>
        <dbReference type="EC" id="6.1.1.7"/>
    </reaction>
</comment>
<comment type="cofactor">
    <cofactor evidence="1">
        <name>Zn(2+)</name>
        <dbReference type="ChEBI" id="CHEBI:29105"/>
    </cofactor>
    <text evidence="1">Binds 1 zinc ion per subunit.</text>
</comment>
<comment type="subcellular location">
    <subcellularLocation>
        <location evidence="1">Cytoplasm</location>
    </subcellularLocation>
</comment>
<comment type="domain">
    <text evidence="1">Consists of three domains; the N-terminal catalytic domain, the editing domain and the C-terminal C-Ala domain. The editing domain removes incorrectly charged amino acids, while the C-Ala domain, along with tRNA(Ala), serves as a bridge to cooperatively bring together the editing and aminoacylation centers thus stimulating deacylation of misacylated tRNAs.</text>
</comment>
<comment type="similarity">
    <text evidence="1">Belongs to the class-II aminoacyl-tRNA synthetase family.</text>
</comment>
<dbReference type="EC" id="6.1.1.7" evidence="1"/>
<dbReference type="EMBL" id="CP000480">
    <property type="protein sequence ID" value="ABK71787.1"/>
    <property type="molecule type" value="Genomic_DNA"/>
</dbReference>
<dbReference type="EMBL" id="CP001663">
    <property type="protein sequence ID" value="AFP39414.1"/>
    <property type="molecule type" value="Genomic_DNA"/>
</dbReference>
<dbReference type="RefSeq" id="WP_011728764.1">
    <property type="nucleotide sequence ID" value="NZ_SIJM01000002.1"/>
</dbReference>
<dbReference type="RefSeq" id="YP_887342.1">
    <property type="nucleotide sequence ID" value="NC_008596.1"/>
</dbReference>
<dbReference type="SMR" id="A0QWQ4"/>
<dbReference type="STRING" id="246196.MSMEG_3025"/>
<dbReference type="PaxDb" id="246196-MSMEI_2950"/>
<dbReference type="GeneID" id="93457804"/>
<dbReference type="KEGG" id="msb:LJ00_15055"/>
<dbReference type="KEGG" id="msg:MSMEI_2950"/>
<dbReference type="KEGG" id="msm:MSMEG_3025"/>
<dbReference type="PATRIC" id="fig|246196.19.peg.2987"/>
<dbReference type="eggNOG" id="COG0013">
    <property type="taxonomic scope" value="Bacteria"/>
</dbReference>
<dbReference type="OrthoDB" id="9803884at2"/>
<dbReference type="Proteomes" id="UP000000757">
    <property type="component" value="Chromosome"/>
</dbReference>
<dbReference type="Proteomes" id="UP000006158">
    <property type="component" value="Chromosome"/>
</dbReference>
<dbReference type="GO" id="GO:0005829">
    <property type="term" value="C:cytosol"/>
    <property type="evidence" value="ECO:0007669"/>
    <property type="project" value="TreeGrafter"/>
</dbReference>
<dbReference type="GO" id="GO:0004813">
    <property type="term" value="F:alanine-tRNA ligase activity"/>
    <property type="evidence" value="ECO:0007669"/>
    <property type="project" value="UniProtKB-UniRule"/>
</dbReference>
<dbReference type="GO" id="GO:0002161">
    <property type="term" value="F:aminoacyl-tRNA deacylase activity"/>
    <property type="evidence" value="ECO:0007669"/>
    <property type="project" value="TreeGrafter"/>
</dbReference>
<dbReference type="GO" id="GO:0005524">
    <property type="term" value="F:ATP binding"/>
    <property type="evidence" value="ECO:0007669"/>
    <property type="project" value="UniProtKB-UniRule"/>
</dbReference>
<dbReference type="GO" id="GO:0000049">
    <property type="term" value="F:tRNA binding"/>
    <property type="evidence" value="ECO:0007669"/>
    <property type="project" value="UniProtKB-KW"/>
</dbReference>
<dbReference type="GO" id="GO:0008270">
    <property type="term" value="F:zinc ion binding"/>
    <property type="evidence" value="ECO:0007669"/>
    <property type="project" value="UniProtKB-UniRule"/>
</dbReference>
<dbReference type="GO" id="GO:0006419">
    <property type="term" value="P:alanyl-tRNA aminoacylation"/>
    <property type="evidence" value="ECO:0007669"/>
    <property type="project" value="UniProtKB-UniRule"/>
</dbReference>
<dbReference type="CDD" id="cd00673">
    <property type="entry name" value="AlaRS_core"/>
    <property type="match status" value="1"/>
</dbReference>
<dbReference type="FunFam" id="3.10.310.40:FF:000001">
    <property type="entry name" value="Alanine--tRNA ligase"/>
    <property type="match status" value="1"/>
</dbReference>
<dbReference type="FunFam" id="3.30.54.20:FF:000001">
    <property type="entry name" value="Alanine--tRNA ligase"/>
    <property type="match status" value="1"/>
</dbReference>
<dbReference type="FunFam" id="3.30.930.10:FF:000004">
    <property type="entry name" value="Alanine--tRNA ligase"/>
    <property type="match status" value="1"/>
</dbReference>
<dbReference type="FunFam" id="3.30.980.10:FF:000004">
    <property type="entry name" value="Alanine--tRNA ligase, cytoplasmic"/>
    <property type="match status" value="1"/>
</dbReference>
<dbReference type="Gene3D" id="2.40.30.130">
    <property type="match status" value="1"/>
</dbReference>
<dbReference type="Gene3D" id="3.10.310.40">
    <property type="match status" value="1"/>
</dbReference>
<dbReference type="Gene3D" id="3.30.54.20">
    <property type="match status" value="1"/>
</dbReference>
<dbReference type="Gene3D" id="6.10.250.550">
    <property type="match status" value="1"/>
</dbReference>
<dbReference type="Gene3D" id="3.30.930.10">
    <property type="entry name" value="Bira Bifunctional Protein, Domain 2"/>
    <property type="match status" value="1"/>
</dbReference>
<dbReference type="Gene3D" id="3.30.980.10">
    <property type="entry name" value="Threonyl-trna Synthetase, Chain A, domain 2"/>
    <property type="match status" value="1"/>
</dbReference>
<dbReference type="HAMAP" id="MF_00036_B">
    <property type="entry name" value="Ala_tRNA_synth_B"/>
    <property type="match status" value="1"/>
</dbReference>
<dbReference type="InterPro" id="IPR045864">
    <property type="entry name" value="aa-tRNA-synth_II/BPL/LPL"/>
</dbReference>
<dbReference type="InterPro" id="IPR002318">
    <property type="entry name" value="Ala-tRNA-lgiase_IIc"/>
</dbReference>
<dbReference type="InterPro" id="IPR018162">
    <property type="entry name" value="Ala-tRNA-ligase_IIc_anticod-bd"/>
</dbReference>
<dbReference type="InterPro" id="IPR018165">
    <property type="entry name" value="Ala-tRNA-synth_IIc_core"/>
</dbReference>
<dbReference type="InterPro" id="IPR018164">
    <property type="entry name" value="Ala-tRNA-synth_IIc_N"/>
</dbReference>
<dbReference type="InterPro" id="IPR050058">
    <property type="entry name" value="Ala-tRNA_ligase"/>
</dbReference>
<dbReference type="InterPro" id="IPR023033">
    <property type="entry name" value="Ala_tRNA_ligase_euk/bac"/>
</dbReference>
<dbReference type="InterPro" id="IPR003156">
    <property type="entry name" value="DHHA1_dom"/>
</dbReference>
<dbReference type="InterPro" id="IPR018163">
    <property type="entry name" value="Thr/Ala-tRNA-synth_IIc_edit"/>
</dbReference>
<dbReference type="InterPro" id="IPR009000">
    <property type="entry name" value="Transl_B-barrel_sf"/>
</dbReference>
<dbReference type="InterPro" id="IPR012947">
    <property type="entry name" value="tRNA_SAD"/>
</dbReference>
<dbReference type="NCBIfam" id="TIGR00344">
    <property type="entry name" value="alaS"/>
    <property type="match status" value="1"/>
</dbReference>
<dbReference type="PANTHER" id="PTHR11777:SF9">
    <property type="entry name" value="ALANINE--TRNA LIGASE, CYTOPLASMIC"/>
    <property type="match status" value="1"/>
</dbReference>
<dbReference type="PANTHER" id="PTHR11777">
    <property type="entry name" value="ALANYL-TRNA SYNTHETASE"/>
    <property type="match status" value="1"/>
</dbReference>
<dbReference type="Pfam" id="PF02272">
    <property type="entry name" value="DHHA1"/>
    <property type="match status" value="1"/>
</dbReference>
<dbReference type="Pfam" id="PF01411">
    <property type="entry name" value="tRNA-synt_2c"/>
    <property type="match status" value="1"/>
</dbReference>
<dbReference type="Pfam" id="PF07973">
    <property type="entry name" value="tRNA_SAD"/>
    <property type="match status" value="1"/>
</dbReference>
<dbReference type="PRINTS" id="PR00980">
    <property type="entry name" value="TRNASYNTHALA"/>
</dbReference>
<dbReference type="SMART" id="SM00863">
    <property type="entry name" value="tRNA_SAD"/>
    <property type="match status" value="1"/>
</dbReference>
<dbReference type="SUPFAM" id="SSF55681">
    <property type="entry name" value="Class II aaRS and biotin synthetases"/>
    <property type="match status" value="1"/>
</dbReference>
<dbReference type="SUPFAM" id="SSF101353">
    <property type="entry name" value="Putative anticodon-binding domain of alanyl-tRNA synthetase (AlaRS)"/>
    <property type="match status" value="1"/>
</dbReference>
<dbReference type="SUPFAM" id="SSF55186">
    <property type="entry name" value="ThrRS/AlaRS common domain"/>
    <property type="match status" value="1"/>
</dbReference>
<dbReference type="SUPFAM" id="SSF50447">
    <property type="entry name" value="Translation proteins"/>
    <property type="match status" value="1"/>
</dbReference>
<dbReference type="PROSITE" id="PS50860">
    <property type="entry name" value="AA_TRNA_LIGASE_II_ALA"/>
    <property type="match status" value="1"/>
</dbReference>
<feature type="chain" id="PRO_0000347683" description="Alanine--tRNA ligase">
    <location>
        <begin position="1"/>
        <end position="896"/>
    </location>
</feature>
<feature type="binding site" evidence="1">
    <location>
        <position position="580"/>
    </location>
    <ligand>
        <name>Zn(2+)</name>
        <dbReference type="ChEBI" id="CHEBI:29105"/>
    </ligand>
</feature>
<feature type="binding site" evidence="1">
    <location>
        <position position="584"/>
    </location>
    <ligand>
        <name>Zn(2+)</name>
        <dbReference type="ChEBI" id="CHEBI:29105"/>
    </ligand>
</feature>
<feature type="binding site" evidence="1">
    <location>
        <position position="683"/>
    </location>
    <ligand>
        <name>Zn(2+)</name>
        <dbReference type="ChEBI" id="CHEBI:29105"/>
    </ligand>
</feature>
<feature type="binding site" evidence="1">
    <location>
        <position position="687"/>
    </location>
    <ligand>
        <name>Zn(2+)</name>
        <dbReference type="ChEBI" id="CHEBI:29105"/>
    </ligand>
</feature>
<evidence type="ECO:0000255" key="1">
    <source>
        <dbReference type="HAMAP-Rule" id="MF_00036"/>
    </source>
</evidence>
<accession>A0QWQ4</accession>
<accession>I7GAA7</accession>
<protein>
    <recommendedName>
        <fullName evidence="1">Alanine--tRNA ligase</fullName>
        <ecNumber evidence="1">6.1.1.7</ecNumber>
    </recommendedName>
    <alternativeName>
        <fullName evidence="1">Alanyl-tRNA synthetase</fullName>
        <shortName evidence="1">AlaRS</shortName>
    </alternativeName>
</protein>
<organism>
    <name type="scientific">Mycolicibacterium smegmatis (strain ATCC 700084 / mc(2)155)</name>
    <name type="common">Mycobacterium smegmatis</name>
    <dbReference type="NCBI Taxonomy" id="246196"/>
    <lineage>
        <taxon>Bacteria</taxon>
        <taxon>Bacillati</taxon>
        <taxon>Actinomycetota</taxon>
        <taxon>Actinomycetes</taxon>
        <taxon>Mycobacteriales</taxon>
        <taxon>Mycobacteriaceae</taxon>
        <taxon>Mycolicibacterium</taxon>
    </lineage>
</organism>
<gene>
    <name evidence="1" type="primary">alaS</name>
    <name type="ordered locus">MSMEG_3025</name>
    <name type="ordered locus">MSMEI_2950</name>
</gene>
<keyword id="KW-0030">Aminoacyl-tRNA synthetase</keyword>
<keyword id="KW-0067">ATP-binding</keyword>
<keyword id="KW-0963">Cytoplasm</keyword>
<keyword id="KW-0436">Ligase</keyword>
<keyword id="KW-0479">Metal-binding</keyword>
<keyword id="KW-0547">Nucleotide-binding</keyword>
<keyword id="KW-0648">Protein biosynthesis</keyword>
<keyword id="KW-1185">Reference proteome</keyword>
<keyword id="KW-0694">RNA-binding</keyword>
<keyword id="KW-0820">tRNA-binding</keyword>
<keyword id="KW-0862">Zinc</keyword>
<proteinExistence type="evidence at protein level"/>